<gene>
    <name evidence="1" type="primary">matP</name>
    <name type="ordered locus">ECED1_0979</name>
</gene>
<organism>
    <name type="scientific">Escherichia coli O81 (strain ED1a)</name>
    <dbReference type="NCBI Taxonomy" id="585397"/>
    <lineage>
        <taxon>Bacteria</taxon>
        <taxon>Pseudomonadati</taxon>
        <taxon>Pseudomonadota</taxon>
        <taxon>Gammaproteobacteria</taxon>
        <taxon>Enterobacterales</taxon>
        <taxon>Enterobacteriaceae</taxon>
        <taxon>Escherichia</taxon>
    </lineage>
</organism>
<dbReference type="EMBL" id="CU928162">
    <property type="protein sequence ID" value="CAR07181.1"/>
    <property type="molecule type" value="Genomic_DNA"/>
</dbReference>
<dbReference type="RefSeq" id="WP_000877153.1">
    <property type="nucleotide sequence ID" value="NC_011745.1"/>
</dbReference>
<dbReference type="SMR" id="B7MS67"/>
<dbReference type="KEGG" id="ecq:ECED1_0979"/>
<dbReference type="HOGENOM" id="CLU_142157_0_0_6"/>
<dbReference type="Proteomes" id="UP000000748">
    <property type="component" value="Chromosome"/>
</dbReference>
<dbReference type="GO" id="GO:0005737">
    <property type="term" value="C:cytoplasm"/>
    <property type="evidence" value="ECO:0007669"/>
    <property type="project" value="UniProtKB-SubCell"/>
</dbReference>
<dbReference type="GO" id="GO:0043565">
    <property type="term" value="F:sequence-specific DNA binding"/>
    <property type="evidence" value="ECO:0007669"/>
    <property type="project" value="UniProtKB-UniRule"/>
</dbReference>
<dbReference type="GO" id="GO:0051301">
    <property type="term" value="P:cell division"/>
    <property type="evidence" value="ECO:0007669"/>
    <property type="project" value="UniProtKB-UniRule"/>
</dbReference>
<dbReference type="GO" id="GO:0006355">
    <property type="term" value="P:regulation of DNA-templated transcription"/>
    <property type="evidence" value="ECO:0007669"/>
    <property type="project" value="InterPro"/>
</dbReference>
<dbReference type="FunFam" id="1.10.1220.10:FF:000004">
    <property type="entry name" value="Macrodomain Ter protein"/>
    <property type="match status" value="1"/>
</dbReference>
<dbReference type="FunFam" id="1.20.1270.380:FF:000001">
    <property type="entry name" value="Macrodomain Ter protein"/>
    <property type="match status" value="1"/>
</dbReference>
<dbReference type="Gene3D" id="1.20.1270.380">
    <property type="entry name" value="MatP, N-terminal domain"/>
    <property type="match status" value="1"/>
</dbReference>
<dbReference type="Gene3D" id="1.10.1220.10">
    <property type="entry name" value="Met repressor-like"/>
    <property type="match status" value="1"/>
</dbReference>
<dbReference type="HAMAP" id="MF_01073">
    <property type="entry name" value="MatP"/>
    <property type="match status" value="1"/>
</dbReference>
<dbReference type="InterPro" id="IPR013321">
    <property type="entry name" value="Arc_rbn_hlx_hlx"/>
</dbReference>
<dbReference type="InterPro" id="IPR009390">
    <property type="entry name" value="MatP"/>
</dbReference>
<dbReference type="InterPro" id="IPR035375">
    <property type="entry name" value="MatP_C"/>
</dbReference>
<dbReference type="InterPro" id="IPR035087">
    <property type="entry name" value="MatP_N"/>
</dbReference>
<dbReference type="InterPro" id="IPR038339">
    <property type="entry name" value="MatP_N_sf"/>
</dbReference>
<dbReference type="NCBIfam" id="NF003471">
    <property type="entry name" value="PRK05097.1"/>
    <property type="match status" value="1"/>
</dbReference>
<dbReference type="Pfam" id="PF06303">
    <property type="entry name" value="MatP"/>
    <property type="match status" value="1"/>
</dbReference>
<dbReference type="Pfam" id="PF17414">
    <property type="entry name" value="MatP_C"/>
    <property type="match status" value="1"/>
</dbReference>
<feature type="chain" id="PRO_1000149764" description="Macrodomain Ter protein">
    <location>
        <begin position="1"/>
        <end position="150"/>
    </location>
</feature>
<accession>B7MS67</accession>
<sequence length="150" mass="17723">MKYQQLENLESGWKWKYLVKKHREGELITRYIEASAAQEAVDELLSLENEPVLVNGWIDKHMNPELVNRMKQTIRARRKRHFNAEHQHTRKKSIDLEFIVWQRLAGLAQRRGKTLSETIVQLIEDAENKEKYANKMSSLKQDLQALLGKE</sequence>
<reference key="1">
    <citation type="journal article" date="2009" name="PLoS Genet.">
        <title>Organised genome dynamics in the Escherichia coli species results in highly diverse adaptive paths.</title>
        <authorList>
            <person name="Touchon M."/>
            <person name="Hoede C."/>
            <person name="Tenaillon O."/>
            <person name="Barbe V."/>
            <person name="Baeriswyl S."/>
            <person name="Bidet P."/>
            <person name="Bingen E."/>
            <person name="Bonacorsi S."/>
            <person name="Bouchier C."/>
            <person name="Bouvet O."/>
            <person name="Calteau A."/>
            <person name="Chiapello H."/>
            <person name="Clermont O."/>
            <person name="Cruveiller S."/>
            <person name="Danchin A."/>
            <person name="Diard M."/>
            <person name="Dossat C."/>
            <person name="Karoui M.E."/>
            <person name="Frapy E."/>
            <person name="Garry L."/>
            <person name="Ghigo J.M."/>
            <person name="Gilles A.M."/>
            <person name="Johnson J."/>
            <person name="Le Bouguenec C."/>
            <person name="Lescat M."/>
            <person name="Mangenot S."/>
            <person name="Martinez-Jehanne V."/>
            <person name="Matic I."/>
            <person name="Nassif X."/>
            <person name="Oztas S."/>
            <person name="Petit M.A."/>
            <person name="Pichon C."/>
            <person name="Rouy Z."/>
            <person name="Ruf C.S."/>
            <person name="Schneider D."/>
            <person name="Tourret J."/>
            <person name="Vacherie B."/>
            <person name="Vallenet D."/>
            <person name="Medigue C."/>
            <person name="Rocha E.P.C."/>
            <person name="Denamur E."/>
        </authorList>
    </citation>
    <scope>NUCLEOTIDE SEQUENCE [LARGE SCALE GENOMIC DNA]</scope>
    <source>
        <strain>ED1a</strain>
    </source>
</reference>
<evidence type="ECO:0000255" key="1">
    <source>
        <dbReference type="HAMAP-Rule" id="MF_01073"/>
    </source>
</evidence>
<name>MATP_ECO81</name>
<comment type="function">
    <text evidence="1">Required for spatial organization of the terminus region of the chromosome (Ter macrodomain) during the cell cycle. Prevents early segregation of duplicated Ter macrodomains during cell division. Binds specifically to matS, which is a 13 bp signature motif repeated within the Ter macrodomain.</text>
</comment>
<comment type="subunit">
    <text evidence="1">Homodimer.</text>
</comment>
<comment type="subcellular location">
    <subcellularLocation>
        <location evidence="1">Cytoplasm</location>
    </subcellularLocation>
</comment>
<comment type="similarity">
    <text evidence="1">Belongs to the MatP family.</text>
</comment>
<protein>
    <recommendedName>
        <fullName evidence="1">Macrodomain Ter protein</fullName>
    </recommendedName>
</protein>
<keyword id="KW-0131">Cell cycle</keyword>
<keyword id="KW-0132">Cell division</keyword>
<keyword id="KW-0963">Cytoplasm</keyword>
<keyword id="KW-0238">DNA-binding</keyword>
<proteinExistence type="inferred from homology"/>